<evidence type="ECO:0000250" key="1">
    <source>
        <dbReference type="UniProtKB" id="C7EXK4"/>
    </source>
</evidence>
<evidence type="ECO:0000250" key="2">
    <source>
        <dbReference type="UniProtKB" id="P04191"/>
    </source>
</evidence>
<evidence type="ECO:0000250" key="3">
    <source>
        <dbReference type="UniProtKB" id="P98200"/>
    </source>
</evidence>
<evidence type="ECO:0000250" key="4">
    <source>
        <dbReference type="UniProtKB" id="Q8NB49"/>
    </source>
</evidence>
<evidence type="ECO:0000250" key="5">
    <source>
        <dbReference type="UniProtKB" id="Q9Y2Q0"/>
    </source>
</evidence>
<evidence type="ECO:0000255" key="6"/>
<evidence type="ECO:0000256" key="7">
    <source>
        <dbReference type="SAM" id="MobiDB-lite"/>
    </source>
</evidence>
<evidence type="ECO:0000269" key="8">
    <source>
    </source>
</evidence>
<evidence type="ECO:0000269" key="9">
    <source>
    </source>
</evidence>
<evidence type="ECO:0000269" key="10">
    <source>
    </source>
</evidence>
<evidence type="ECO:0000269" key="11">
    <source>
    </source>
</evidence>
<evidence type="ECO:0000269" key="12">
    <source>
    </source>
</evidence>
<evidence type="ECO:0000269" key="13">
    <source>
    </source>
</evidence>
<evidence type="ECO:0000269" key="14">
    <source>
    </source>
</evidence>
<evidence type="ECO:0000269" key="15">
    <source>
    </source>
</evidence>
<evidence type="ECO:0000269" key="16">
    <source>
    </source>
</evidence>
<evidence type="ECO:0000305" key="17"/>
<evidence type="ECO:0000305" key="18">
    <source>
    </source>
</evidence>
<evidence type="ECO:0000305" key="19">
    <source>
    </source>
</evidence>
<evidence type="ECO:0000312" key="20">
    <source>
        <dbReference type="HGNC" id="HGNC:13533"/>
    </source>
</evidence>
<gene>
    <name evidence="20" type="primary">ATP8A2</name>
    <name type="synonym">ATPIB</name>
</gene>
<reference key="1">
    <citation type="submission" date="2003-01" db="EMBL/GenBank/DDBJ databases">
        <authorList>
            <person name="Sun X.L."/>
            <person name="Milo G.E."/>
            <person name="Li D."/>
        </authorList>
    </citation>
    <scope>NUCLEOTIDE SEQUENCE [MRNA] (ISOFORM 2)</scope>
</reference>
<reference key="2">
    <citation type="journal article" date="2004" name="Nat. Genet.">
        <title>Complete sequencing and characterization of 21,243 full-length human cDNAs.</title>
        <authorList>
            <person name="Ota T."/>
            <person name="Suzuki Y."/>
            <person name="Nishikawa T."/>
            <person name="Otsuki T."/>
            <person name="Sugiyama T."/>
            <person name="Irie R."/>
            <person name="Wakamatsu A."/>
            <person name="Hayashi K."/>
            <person name="Sato H."/>
            <person name="Nagai K."/>
            <person name="Kimura K."/>
            <person name="Makita H."/>
            <person name="Sekine M."/>
            <person name="Obayashi M."/>
            <person name="Nishi T."/>
            <person name="Shibahara T."/>
            <person name="Tanaka T."/>
            <person name="Ishii S."/>
            <person name="Yamamoto J."/>
            <person name="Saito K."/>
            <person name="Kawai Y."/>
            <person name="Isono Y."/>
            <person name="Nakamura Y."/>
            <person name="Nagahari K."/>
            <person name="Murakami K."/>
            <person name="Yasuda T."/>
            <person name="Iwayanagi T."/>
            <person name="Wagatsuma M."/>
            <person name="Shiratori A."/>
            <person name="Sudo H."/>
            <person name="Hosoiri T."/>
            <person name="Kaku Y."/>
            <person name="Kodaira H."/>
            <person name="Kondo H."/>
            <person name="Sugawara M."/>
            <person name="Takahashi M."/>
            <person name="Kanda K."/>
            <person name="Yokoi T."/>
            <person name="Furuya T."/>
            <person name="Kikkawa E."/>
            <person name="Omura Y."/>
            <person name="Abe K."/>
            <person name="Kamihara K."/>
            <person name="Katsuta N."/>
            <person name="Sato K."/>
            <person name="Tanikawa M."/>
            <person name="Yamazaki M."/>
            <person name="Ninomiya K."/>
            <person name="Ishibashi T."/>
            <person name="Yamashita H."/>
            <person name="Murakawa K."/>
            <person name="Fujimori K."/>
            <person name="Tanai H."/>
            <person name="Kimata M."/>
            <person name="Watanabe M."/>
            <person name="Hiraoka S."/>
            <person name="Chiba Y."/>
            <person name="Ishida S."/>
            <person name="Ono Y."/>
            <person name="Takiguchi S."/>
            <person name="Watanabe S."/>
            <person name="Yosida M."/>
            <person name="Hotuta T."/>
            <person name="Kusano J."/>
            <person name="Kanehori K."/>
            <person name="Takahashi-Fujii A."/>
            <person name="Hara H."/>
            <person name="Tanase T.-O."/>
            <person name="Nomura Y."/>
            <person name="Togiya S."/>
            <person name="Komai F."/>
            <person name="Hara R."/>
            <person name="Takeuchi K."/>
            <person name="Arita M."/>
            <person name="Imose N."/>
            <person name="Musashino K."/>
            <person name="Yuuki H."/>
            <person name="Oshima A."/>
            <person name="Sasaki N."/>
            <person name="Aotsuka S."/>
            <person name="Yoshikawa Y."/>
            <person name="Matsunawa H."/>
            <person name="Ichihara T."/>
            <person name="Shiohata N."/>
            <person name="Sano S."/>
            <person name="Moriya S."/>
            <person name="Momiyama H."/>
            <person name="Satoh N."/>
            <person name="Takami S."/>
            <person name="Terashima Y."/>
            <person name="Suzuki O."/>
            <person name="Nakagawa S."/>
            <person name="Senoh A."/>
            <person name="Mizoguchi H."/>
            <person name="Goto Y."/>
            <person name="Shimizu F."/>
            <person name="Wakebe H."/>
            <person name="Hishigaki H."/>
            <person name="Watanabe T."/>
            <person name="Sugiyama A."/>
            <person name="Takemoto M."/>
            <person name="Kawakami B."/>
            <person name="Yamazaki M."/>
            <person name="Watanabe K."/>
            <person name="Kumagai A."/>
            <person name="Itakura S."/>
            <person name="Fukuzumi Y."/>
            <person name="Fujimori Y."/>
            <person name="Komiyama M."/>
            <person name="Tashiro H."/>
            <person name="Tanigami A."/>
            <person name="Fujiwara T."/>
            <person name="Ono T."/>
            <person name="Yamada K."/>
            <person name="Fujii Y."/>
            <person name="Ozaki K."/>
            <person name="Hirao M."/>
            <person name="Ohmori Y."/>
            <person name="Kawabata A."/>
            <person name="Hikiji T."/>
            <person name="Kobatake N."/>
            <person name="Inagaki H."/>
            <person name="Ikema Y."/>
            <person name="Okamoto S."/>
            <person name="Okitani R."/>
            <person name="Kawakami T."/>
            <person name="Noguchi S."/>
            <person name="Itoh T."/>
            <person name="Shigeta K."/>
            <person name="Senba T."/>
            <person name="Matsumura K."/>
            <person name="Nakajima Y."/>
            <person name="Mizuno T."/>
            <person name="Morinaga M."/>
            <person name="Sasaki M."/>
            <person name="Togashi T."/>
            <person name="Oyama M."/>
            <person name="Hata H."/>
            <person name="Watanabe M."/>
            <person name="Komatsu T."/>
            <person name="Mizushima-Sugano J."/>
            <person name="Satoh T."/>
            <person name="Shirai Y."/>
            <person name="Takahashi Y."/>
            <person name="Nakagawa K."/>
            <person name="Okumura K."/>
            <person name="Nagase T."/>
            <person name="Nomura N."/>
            <person name="Kikuchi H."/>
            <person name="Masuho Y."/>
            <person name="Yamashita R."/>
            <person name="Nakai K."/>
            <person name="Yada T."/>
            <person name="Nakamura Y."/>
            <person name="Ohara O."/>
            <person name="Isogai T."/>
            <person name="Sugano S."/>
        </authorList>
    </citation>
    <scope>NUCLEOTIDE SEQUENCE [LARGE SCALE MRNA] (ISOFORM 3)</scope>
    <scope>NUCLEOTIDE SEQUENCE [LARGE SCALE MRNA] OF 359-1188 (ISOFORM 1)</scope>
    <source>
        <tissue>Amygdala</tissue>
        <tissue>Hippocampus</tissue>
    </source>
</reference>
<reference key="3">
    <citation type="journal article" date="2004" name="Nature">
        <title>The DNA sequence and analysis of human chromosome 13.</title>
        <authorList>
            <person name="Dunham A."/>
            <person name="Matthews L.H."/>
            <person name="Burton J."/>
            <person name="Ashurst J.L."/>
            <person name="Howe K.L."/>
            <person name="Ashcroft K.J."/>
            <person name="Beare D.M."/>
            <person name="Burford D.C."/>
            <person name="Hunt S.E."/>
            <person name="Griffiths-Jones S."/>
            <person name="Jones M.C."/>
            <person name="Keenan S.J."/>
            <person name="Oliver K."/>
            <person name="Scott C.E."/>
            <person name="Ainscough R."/>
            <person name="Almeida J.P."/>
            <person name="Ambrose K.D."/>
            <person name="Andrews D.T."/>
            <person name="Ashwell R.I.S."/>
            <person name="Babbage A.K."/>
            <person name="Bagguley C.L."/>
            <person name="Bailey J."/>
            <person name="Bannerjee R."/>
            <person name="Barlow K.F."/>
            <person name="Bates K."/>
            <person name="Beasley H."/>
            <person name="Bird C.P."/>
            <person name="Bray-Allen S."/>
            <person name="Brown A.J."/>
            <person name="Brown J.Y."/>
            <person name="Burrill W."/>
            <person name="Carder C."/>
            <person name="Carter N.P."/>
            <person name="Chapman J.C."/>
            <person name="Clamp M.E."/>
            <person name="Clark S.Y."/>
            <person name="Clarke G."/>
            <person name="Clee C.M."/>
            <person name="Clegg S.C."/>
            <person name="Cobley V."/>
            <person name="Collins J.E."/>
            <person name="Corby N."/>
            <person name="Coville G.J."/>
            <person name="Deloukas P."/>
            <person name="Dhami P."/>
            <person name="Dunham I."/>
            <person name="Dunn M."/>
            <person name="Earthrowl M.E."/>
            <person name="Ellington A.G."/>
            <person name="Faulkner L."/>
            <person name="Frankish A.G."/>
            <person name="Frankland J."/>
            <person name="French L."/>
            <person name="Garner P."/>
            <person name="Garnett J."/>
            <person name="Gilbert J.G.R."/>
            <person name="Gilson C.J."/>
            <person name="Ghori J."/>
            <person name="Grafham D.V."/>
            <person name="Gribble S.M."/>
            <person name="Griffiths C."/>
            <person name="Hall R.E."/>
            <person name="Hammond S."/>
            <person name="Harley J.L."/>
            <person name="Hart E.A."/>
            <person name="Heath P.D."/>
            <person name="Howden P.J."/>
            <person name="Huckle E.J."/>
            <person name="Hunt P.J."/>
            <person name="Hunt A.R."/>
            <person name="Johnson C."/>
            <person name="Johnson D."/>
            <person name="Kay M."/>
            <person name="Kimberley A.M."/>
            <person name="King A."/>
            <person name="Laird G.K."/>
            <person name="Langford C.J."/>
            <person name="Lawlor S."/>
            <person name="Leongamornlert D.A."/>
            <person name="Lloyd D.M."/>
            <person name="Lloyd C."/>
            <person name="Loveland J.E."/>
            <person name="Lovell J."/>
            <person name="Martin S."/>
            <person name="Mashreghi-Mohammadi M."/>
            <person name="McLaren S.J."/>
            <person name="McMurray A."/>
            <person name="Milne S."/>
            <person name="Moore M.J.F."/>
            <person name="Nickerson T."/>
            <person name="Palmer S.A."/>
            <person name="Pearce A.V."/>
            <person name="Peck A.I."/>
            <person name="Pelan S."/>
            <person name="Phillimore B."/>
            <person name="Porter K.M."/>
            <person name="Rice C.M."/>
            <person name="Searle S."/>
            <person name="Sehra H.K."/>
            <person name="Shownkeen R."/>
            <person name="Skuce C.D."/>
            <person name="Smith M."/>
            <person name="Steward C.A."/>
            <person name="Sycamore N."/>
            <person name="Tester J."/>
            <person name="Thomas D.W."/>
            <person name="Tracey A."/>
            <person name="Tromans A."/>
            <person name="Tubby B."/>
            <person name="Wall M."/>
            <person name="Wallis J.M."/>
            <person name="West A.P."/>
            <person name="Whitehead S.L."/>
            <person name="Willey D.L."/>
            <person name="Wilming L."/>
            <person name="Wray P.W."/>
            <person name="Wright M.W."/>
            <person name="Young L."/>
            <person name="Coulson A."/>
            <person name="Durbin R.M."/>
            <person name="Hubbard T."/>
            <person name="Sulston J.E."/>
            <person name="Beck S."/>
            <person name="Bentley D.R."/>
            <person name="Rogers J."/>
            <person name="Ross M.T."/>
        </authorList>
    </citation>
    <scope>NUCLEOTIDE SEQUENCE [LARGE SCALE GENOMIC DNA]</scope>
</reference>
<reference key="4">
    <citation type="journal article" date="1999" name="Gene Expr.">
        <title>Changes in levels of normal ML-1 gene transcripts associated with the conversion of human nontumorigenic to tumorigenic phenotypes.</title>
        <authorList>
            <person name="Sun X.L."/>
            <person name="Li D."/>
            <person name="Fang J."/>
            <person name="Noyes I."/>
            <person name="Casto B."/>
            <person name="Theil K."/>
            <person name="Shuler C."/>
            <person name="Milo G.E."/>
        </authorList>
    </citation>
    <scope>PARTIAL NUCLEOTIDE SEQUENCE [MRNA]</scope>
</reference>
<reference key="5">
    <citation type="journal article" date="2007" name="BMC Genomics">
        <title>The full-ORF clone resource of the German cDNA consortium.</title>
        <authorList>
            <person name="Bechtel S."/>
            <person name="Rosenfelder H."/>
            <person name="Duda A."/>
            <person name="Schmidt C.P."/>
            <person name="Ernst U."/>
            <person name="Wellenreuther R."/>
            <person name="Mehrle A."/>
            <person name="Schuster C."/>
            <person name="Bahr A."/>
            <person name="Bloecker H."/>
            <person name="Heubner D."/>
            <person name="Hoerlein A."/>
            <person name="Michel G."/>
            <person name="Wedler H."/>
            <person name="Koehrer K."/>
            <person name="Ottenwaelder B."/>
            <person name="Poustka A."/>
            <person name="Wiemann S."/>
            <person name="Schupp I."/>
        </authorList>
    </citation>
    <scope>NUCLEOTIDE SEQUENCE [LARGE SCALE MRNA] OF 195-1188 (ISOFORM 1)</scope>
    <source>
        <tissue>Amygdala</tissue>
        <tissue>Testis</tissue>
    </source>
</reference>
<reference key="6">
    <citation type="journal article" date="2010" name="Eur. J. Hum. Genet.">
        <title>Disruption of the ATP8A2 gene in a patient with a t(10;13) de novo balanced translocation and a severe neurological phenotype.</title>
        <authorList>
            <person name="Cacciagli P."/>
            <person name="Haddad M.R."/>
            <person name="Mignon-Ravix C."/>
            <person name="El-Waly B."/>
            <person name="Moncla A."/>
            <person name="Missirian C."/>
            <person name="Chabrol B."/>
            <person name="Villard L."/>
        </authorList>
    </citation>
    <scope>TISSUE SPECIFICITY</scope>
    <scope>CHROMOSOMAL TRANSLOCATION</scope>
</reference>
<reference key="7">
    <citation type="journal article" date="2010" name="J. Biol. Chem.">
        <title>Heteromeric interactions required for abundance and subcellular localization of human CDC50 proteins and class 1 P4-ATPases.</title>
        <authorList>
            <person name="van der Velden L.M."/>
            <person name="Wichers C.G."/>
            <person name="van Breevoort A.E."/>
            <person name="Coleman J.A."/>
            <person name="Molday R.S."/>
            <person name="Berger R."/>
            <person name="Klomp L.W."/>
            <person name="van de Graaf S.F."/>
        </authorList>
    </citation>
    <scope>INTERACTION WITH TMEM30A</scope>
    <scope>SUBCELLULAR LOCATION</scope>
</reference>
<reference key="8">
    <citation type="journal article" date="2011" name="J. Biol. Chem.">
        <title>Critical role of the beta-subunit CDC50A in the stable expression, assembly, subcellular localization, and lipid transport activity of the P4-ATPase ATP8A2.</title>
        <authorList>
            <person name="Coleman J.A."/>
            <person name="Molday R.S."/>
        </authorList>
    </citation>
    <scope>INTERACTION WITH TMEM30A</scope>
</reference>
<reference key="9">
    <citation type="journal article" date="2013" name="Eur. J. Hum. Genet.">
        <title>Missense mutation in the ATPase, aminophospholipid transporter protein ATP8A2 is associated with cerebellar atrophy and quadrupedal locomotion.</title>
        <authorList>
            <person name="Onat O.E."/>
            <person name="Gulsuner S."/>
            <person name="Bilguvar K."/>
            <person name="Nazli Basak A."/>
            <person name="Topaloglu H."/>
            <person name="Tan M."/>
            <person name="Tan U."/>
            <person name="Gunel M."/>
            <person name="Ozcelik T."/>
        </authorList>
    </citation>
    <scope>TISSUE SPECIFICITY</scope>
    <scope>VARIANT CAMRQ4 MET-376</scope>
</reference>
<reference key="10">
    <citation type="journal article" date="2019" name="Hum. Mutat.">
        <title>Expression and functional characterization of missense mutations in ATP8A2 linked to severe neurological disorders.</title>
        <authorList>
            <person name="Choi H."/>
            <person name="Andersen J.P."/>
            <person name="Molday R.S."/>
        </authorList>
    </citation>
    <scope>FUNCTION</scope>
    <scope>CATALYTIC ACTIVITY</scope>
    <scope>INTERACTION WITH TMEM30A</scope>
    <scope>CHARACTERIZATION OF VARIANTS CAMRQ4 MET-376; MET-429; ASN-429; PRO-544; TRP-625 AND ARG-702</scope>
    <scope>MUTAGENESIS OF LYS-429</scope>
</reference>
<reference key="11">
    <citation type="journal article" date="2021" name="J. Clin. Invest.">
        <title>A sublethal ATP11A mutation associated with neurological deterioration causes aberrant phosphatidylcholine flipping in plasma membranes.</title>
        <authorList>
            <person name="Segawa K."/>
            <person name="Kikuchi A."/>
            <person name="Noji T."/>
            <person name="Sugiura Y."/>
            <person name="Hiraga K."/>
            <person name="Suzuki C."/>
            <person name="Haginoya K."/>
            <person name="Kobayashi Y."/>
            <person name="Matsunaga M."/>
            <person name="Ochiai Y."/>
            <person name="Yamada K."/>
            <person name="Nishimura T."/>
            <person name="Iwasawa S."/>
            <person name="Shoji W."/>
            <person name="Sugihara F."/>
            <person name="Nishino K."/>
            <person name="Kosako H."/>
            <person name="Ikawa M."/>
            <person name="Uchiyama Y."/>
            <person name="Suematsu M."/>
            <person name="Ishikita H."/>
            <person name="Kure S."/>
            <person name="Nagata S."/>
        </authorList>
    </citation>
    <scope>MUTAGENESIS OF GLN-107</scope>
    <scope>FUNCTION</scope>
</reference>
<reference key="12">
    <citation type="journal article" date="2016" name="Neurogenetics">
        <title>New ATP8A2 gene mutations associated with a novel syndrome: encephalopathy, intellectual disability, severe hypotonia, chorea and optic atrophy.</title>
        <authorList>
            <person name="Martin-Hernandez E."/>
            <person name="Rodriguez-Garcia M.E."/>
            <person name="Camacho A."/>
            <person name="Matilla-Duenas A."/>
            <person name="Garcia-Silva M.T."/>
            <person name="Quijada-Fraile P."/>
            <person name="Corral-Juan M."/>
            <person name="Tejada-Palacios P."/>
            <person name="de Las Heras R.S."/>
            <person name="Arenas J."/>
            <person name="Martin M.A."/>
            <person name="Martinez-Azorin F."/>
        </authorList>
    </citation>
    <scope>VARIANTS CAMRQ4 ASN-429; PRO-544 AND TRP-625</scope>
</reference>
<reference key="13">
    <citation type="journal article" date="2018" name="J. Cent. Nerv. Syst. Dis.">
        <title>Further Delineation of the Clinical Phenotype of Cerebellar Ataxia, Mental Retardation, and Disequilibrium Syndrome Type 4.</title>
        <authorList>
            <person name="Alsahli S."/>
            <person name="Alrifai M.T."/>
            <person name="Al Tala S."/>
            <person name="Mutairi F.A."/>
            <person name="Alfadhel M."/>
        </authorList>
    </citation>
    <scope>VARIANTS CAMRQ4 581-ARG--LYS-1188 DEL AND ASP-917</scope>
</reference>
<reference key="14">
    <citation type="journal article" date="2018" name="Orphanet J. Rare Dis.">
        <title>Recessive mutations in ATP8A2 cause severe hypotonia, cognitive impairment, hyperkinetic movement disorders and progressive optic atrophy.</title>
        <authorList>
            <person name="McMillan H.J."/>
            <person name="Telegrafi A."/>
            <person name="Singleton A."/>
            <person name="Cho M.T."/>
            <person name="Lelli D."/>
            <person name="Lynn F.C."/>
            <person name="Griffin J."/>
            <person name="Asamoah A."/>
            <person name="Rinne T."/>
            <person name="Erasmus C.E."/>
            <person name="Koolen D.A."/>
            <person name="Haaxma C.A."/>
            <person name="Keren B."/>
            <person name="Doummar D."/>
            <person name="Mignot C."/>
            <person name="Thompson I."/>
            <person name="Velsher L."/>
            <person name="Dehghani M."/>
            <person name="Vahidi Mehrjardi M.Y."/>
            <person name="Maroofian R."/>
            <person name="Tchan M."/>
            <person name="Simons C."/>
            <person name="Christodoulou J."/>
            <person name="Martin-Hernandez E."/>
            <person name="Guillen Sacoto M.J."/>
            <person name="Henderson L.B."/>
            <person name="McLaughlin H."/>
            <person name="Molday L.L."/>
            <person name="Molday R.S."/>
            <person name="Yoon G."/>
        </authorList>
    </citation>
    <scope>VARIANTS CAMRQ4 MET-429; 586-ARG--LYS-1188 DEL AND ARG-702</scope>
</reference>
<dbReference type="EC" id="7.6.2.1" evidence="19"/>
<dbReference type="EMBL" id="AF236871">
    <property type="protein sequence ID" value="AAF40215.2"/>
    <property type="status" value="ALT_FRAME"/>
    <property type="molecule type" value="mRNA"/>
</dbReference>
<dbReference type="EMBL" id="AK094653">
    <property type="protein sequence ID" value="BAC04396.1"/>
    <property type="status" value="ALT_INIT"/>
    <property type="molecule type" value="mRNA"/>
</dbReference>
<dbReference type="EMBL" id="AK127263">
    <property type="protein sequence ID" value="BAC86905.1"/>
    <property type="molecule type" value="mRNA"/>
</dbReference>
<dbReference type="EMBL" id="AL136438">
    <property type="status" value="NOT_ANNOTATED_CDS"/>
    <property type="molecule type" value="Genomic_DNA"/>
</dbReference>
<dbReference type="EMBL" id="AL138815">
    <property type="status" value="NOT_ANNOTATED_CDS"/>
    <property type="molecule type" value="Genomic_DNA"/>
</dbReference>
<dbReference type="EMBL" id="AL138958">
    <property type="status" value="NOT_ANNOTATED_CDS"/>
    <property type="molecule type" value="Genomic_DNA"/>
</dbReference>
<dbReference type="EMBL" id="AL157366">
    <property type="status" value="NOT_ANNOTATED_CDS"/>
    <property type="molecule type" value="Genomic_DNA"/>
</dbReference>
<dbReference type="EMBL" id="AL356316">
    <property type="status" value="NOT_ANNOTATED_CDS"/>
    <property type="molecule type" value="Genomic_DNA"/>
</dbReference>
<dbReference type="EMBL" id="AL669971">
    <property type="status" value="NOT_ANNOTATED_CDS"/>
    <property type="molecule type" value="Genomic_DNA"/>
</dbReference>
<dbReference type="EMBL" id="AL137256">
    <property type="protein sequence ID" value="CAB70658.1"/>
    <property type="molecule type" value="mRNA"/>
</dbReference>
<dbReference type="EMBL" id="AL390129">
    <property type="protein sequence ID" value="CAB99084.1"/>
    <property type="molecule type" value="mRNA"/>
</dbReference>
<dbReference type="EMBL" id="BX537836">
    <property type="protein sequence ID" value="CAD97848.1"/>
    <property type="molecule type" value="mRNA"/>
</dbReference>
<dbReference type="CCDS" id="CCDS41873.1">
    <molecule id="Q9NTI2-4"/>
</dbReference>
<dbReference type="PIR" id="T46328">
    <property type="entry name" value="T46328"/>
</dbReference>
<dbReference type="PIR" id="T51867">
    <property type="entry name" value="T51867"/>
</dbReference>
<dbReference type="RefSeq" id="NP_001300670.1">
    <property type="nucleotide sequence ID" value="NM_001313741.1"/>
</dbReference>
<dbReference type="RefSeq" id="NP_057613.4">
    <molecule id="Q9NTI2-4"/>
    <property type="nucleotide sequence ID" value="NM_016529.5"/>
</dbReference>
<dbReference type="RefSeq" id="XP_005266476.1">
    <molecule id="Q9NTI2-1"/>
    <property type="nucleotide sequence ID" value="XM_005266419.2"/>
</dbReference>
<dbReference type="RefSeq" id="XP_047286339.1">
    <molecule id="Q9NTI2-1"/>
    <property type="nucleotide sequence ID" value="XM_047430383.1"/>
</dbReference>
<dbReference type="RefSeq" id="XP_054230574.1">
    <molecule id="Q9NTI2-1"/>
    <property type="nucleotide sequence ID" value="XM_054374599.1"/>
</dbReference>
<dbReference type="RefSeq" id="XP_054230576.1">
    <molecule id="Q9NTI2-1"/>
    <property type="nucleotide sequence ID" value="XM_054374601.1"/>
</dbReference>
<dbReference type="SMR" id="Q9NTI2"/>
<dbReference type="BioGRID" id="119718">
    <property type="interactions" value="6"/>
</dbReference>
<dbReference type="ComplexPortal" id="CPX-6301">
    <property type="entry name" value="ATP8A2-CDC50A P4-ATPase complex"/>
</dbReference>
<dbReference type="FunCoup" id="Q9NTI2">
    <property type="interactions" value="861"/>
</dbReference>
<dbReference type="IntAct" id="Q9NTI2">
    <property type="interactions" value="3"/>
</dbReference>
<dbReference type="STRING" id="9606.ENSP00000371070"/>
<dbReference type="GlyGen" id="Q9NTI2">
    <property type="glycosylation" value="2 sites, 1 O-linked glycan (1 site)"/>
</dbReference>
<dbReference type="iPTMnet" id="Q9NTI2"/>
<dbReference type="PhosphoSitePlus" id="Q9NTI2"/>
<dbReference type="BioMuta" id="ATP8A2"/>
<dbReference type="DMDM" id="30316390"/>
<dbReference type="jPOST" id="Q9NTI2"/>
<dbReference type="MassIVE" id="Q9NTI2"/>
<dbReference type="PaxDb" id="9606-ENSP00000371070"/>
<dbReference type="PeptideAtlas" id="Q9NTI2"/>
<dbReference type="ProteomicsDB" id="82608">
    <molecule id="Q9NTI2-1"/>
</dbReference>
<dbReference type="ProteomicsDB" id="82609">
    <molecule id="Q9NTI2-3"/>
</dbReference>
<dbReference type="TopDownProteomics" id="Q9NTI2-1">
    <molecule id="Q9NTI2-1"/>
</dbReference>
<dbReference type="Antibodypedia" id="50027">
    <property type="antibodies" value="91 antibodies from 15 providers"/>
</dbReference>
<dbReference type="DNASU" id="51761"/>
<dbReference type="Ensembl" id="ENST00000381655.7">
    <molecule id="Q9NTI2-4"/>
    <property type="protein sequence ID" value="ENSP00000371070.2"/>
    <property type="gene ID" value="ENSG00000132932.19"/>
</dbReference>
<dbReference type="Ensembl" id="ENST00000684424.1">
    <molecule id="Q9NTI2-1"/>
    <property type="protein sequence ID" value="ENSP00000507489.1"/>
    <property type="gene ID" value="ENSG00000132932.19"/>
</dbReference>
<dbReference type="GeneID" id="51761"/>
<dbReference type="KEGG" id="hsa:51761"/>
<dbReference type="MANE-Select" id="ENST00000381655.7">
    <property type="protein sequence ID" value="ENSP00000371070.2"/>
    <property type="RefSeq nucleotide sequence ID" value="NM_016529.6"/>
    <property type="RefSeq protein sequence ID" value="NP_057613.4"/>
</dbReference>
<dbReference type="UCSC" id="uc001uqk.4">
    <molecule id="Q9NTI2-4"/>
    <property type="organism name" value="human"/>
</dbReference>
<dbReference type="AGR" id="HGNC:13533"/>
<dbReference type="CTD" id="51761"/>
<dbReference type="DisGeNET" id="51761"/>
<dbReference type="GeneCards" id="ATP8A2"/>
<dbReference type="HGNC" id="HGNC:13533">
    <property type="gene designation" value="ATP8A2"/>
</dbReference>
<dbReference type="HPA" id="ENSG00000132932">
    <property type="expression patterns" value="Group enriched (brain, pituitary gland, retina)"/>
</dbReference>
<dbReference type="MalaCards" id="ATP8A2"/>
<dbReference type="MIM" id="605870">
    <property type="type" value="gene"/>
</dbReference>
<dbReference type="MIM" id="615268">
    <property type="type" value="phenotype"/>
</dbReference>
<dbReference type="neXtProt" id="NX_Q9NTI2"/>
<dbReference type="OpenTargets" id="ENSG00000132932"/>
<dbReference type="Orphanet" id="1766">
    <property type="disease" value="Dysequilibrium syndrome"/>
</dbReference>
<dbReference type="PharmGKB" id="PA25166"/>
<dbReference type="VEuPathDB" id="HostDB:ENSG00000132932"/>
<dbReference type="eggNOG" id="KOG0206">
    <property type="taxonomic scope" value="Eukaryota"/>
</dbReference>
<dbReference type="GeneTree" id="ENSGT00940000157332"/>
<dbReference type="HOGENOM" id="CLU_000846_3_2_1"/>
<dbReference type="InParanoid" id="Q9NTI2"/>
<dbReference type="OMA" id="KHTYKKT"/>
<dbReference type="OrthoDB" id="9519790at2759"/>
<dbReference type="PAN-GO" id="Q9NTI2">
    <property type="GO annotations" value="4 GO annotations based on evolutionary models"/>
</dbReference>
<dbReference type="PhylomeDB" id="Q9NTI2"/>
<dbReference type="TreeFam" id="TF300654"/>
<dbReference type="BRENDA" id="7.6.2.1">
    <property type="organism ID" value="2681"/>
</dbReference>
<dbReference type="PathwayCommons" id="Q9NTI2"/>
<dbReference type="Reactome" id="R-HSA-936837">
    <property type="pathway name" value="Ion transport by P-type ATPases"/>
</dbReference>
<dbReference type="SignaLink" id="Q9NTI2"/>
<dbReference type="BioGRID-ORCS" id="51761">
    <property type="hits" value="12 hits in 1151 CRISPR screens"/>
</dbReference>
<dbReference type="CD-CODE" id="FB4E32DD">
    <property type="entry name" value="Presynaptic clusters and postsynaptic densities"/>
</dbReference>
<dbReference type="ChiTaRS" id="ATP8A2">
    <property type="organism name" value="human"/>
</dbReference>
<dbReference type="GenomeRNAi" id="51761"/>
<dbReference type="Pharos" id="Q9NTI2">
    <property type="development level" value="Tbio"/>
</dbReference>
<dbReference type="PRO" id="PR:Q9NTI2"/>
<dbReference type="Proteomes" id="UP000005640">
    <property type="component" value="Chromosome 13"/>
</dbReference>
<dbReference type="RNAct" id="Q9NTI2">
    <property type="molecule type" value="protein"/>
</dbReference>
<dbReference type="Bgee" id="ENSG00000132932">
    <property type="expression patterns" value="Expressed in middle temporal gyrus and 136 other cell types or tissues"/>
</dbReference>
<dbReference type="ExpressionAtlas" id="Q9NTI2">
    <property type="expression patterns" value="baseline and differential"/>
</dbReference>
<dbReference type="GO" id="GO:0042995">
    <property type="term" value="C:cell projection"/>
    <property type="evidence" value="ECO:0007669"/>
    <property type="project" value="UniProtKB-KW"/>
</dbReference>
<dbReference type="GO" id="GO:0010008">
    <property type="term" value="C:endosome membrane"/>
    <property type="evidence" value="ECO:0007669"/>
    <property type="project" value="UniProtKB-SubCell"/>
</dbReference>
<dbReference type="GO" id="GO:0005794">
    <property type="term" value="C:Golgi apparatus"/>
    <property type="evidence" value="ECO:0000314"/>
    <property type="project" value="UniProtKB"/>
</dbReference>
<dbReference type="GO" id="GO:0000139">
    <property type="term" value="C:Golgi membrane"/>
    <property type="evidence" value="ECO:0007669"/>
    <property type="project" value="UniProtKB-SubCell"/>
</dbReference>
<dbReference type="GO" id="GO:0005654">
    <property type="term" value="C:nucleoplasm"/>
    <property type="evidence" value="ECO:0000314"/>
    <property type="project" value="HPA"/>
</dbReference>
<dbReference type="GO" id="GO:1990531">
    <property type="term" value="C:phospholipid-translocating ATPase complex"/>
    <property type="evidence" value="ECO:0000353"/>
    <property type="project" value="ComplexPortal"/>
</dbReference>
<dbReference type="GO" id="GO:0005886">
    <property type="term" value="C:plasma membrane"/>
    <property type="evidence" value="ECO:0000314"/>
    <property type="project" value="HPA"/>
</dbReference>
<dbReference type="GO" id="GO:0005802">
    <property type="term" value="C:trans-Golgi network"/>
    <property type="evidence" value="ECO:0000318"/>
    <property type="project" value="GO_Central"/>
</dbReference>
<dbReference type="GO" id="GO:0005524">
    <property type="term" value="F:ATP binding"/>
    <property type="evidence" value="ECO:0007669"/>
    <property type="project" value="UniProtKB-KW"/>
</dbReference>
<dbReference type="GO" id="GO:0016887">
    <property type="term" value="F:ATP hydrolysis activity"/>
    <property type="evidence" value="ECO:0007669"/>
    <property type="project" value="InterPro"/>
</dbReference>
<dbReference type="GO" id="GO:0140326">
    <property type="term" value="F:ATPase-coupled intramembrane lipid transporter activity"/>
    <property type="evidence" value="ECO:0000318"/>
    <property type="project" value="GO_Central"/>
</dbReference>
<dbReference type="GO" id="GO:0000287">
    <property type="term" value="F:magnesium ion binding"/>
    <property type="evidence" value="ECO:0007669"/>
    <property type="project" value="InterPro"/>
</dbReference>
<dbReference type="GO" id="GO:0090555">
    <property type="term" value="F:phosphatidylethanolamine flippase activity"/>
    <property type="evidence" value="ECO:0000250"/>
    <property type="project" value="UniProtKB"/>
</dbReference>
<dbReference type="GO" id="GO:0140346">
    <property type="term" value="F:phosphatidylserine flippase activity"/>
    <property type="evidence" value="ECO:0000250"/>
    <property type="project" value="UniProtKB"/>
</dbReference>
<dbReference type="GO" id="GO:0090556">
    <property type="term" value="F:phosphatidylserine floppase activity"/>
    <property type="evidence" value="ECO:0007669"/>
    <property type="project" value="RHEA"/>
</dbReference>
<dbReference type="GO" id="GO:0140331">
    <property type="term" value="P:aminophospholipid translocation"/>
    <property type="evidence" value="ECO:0000250"/>
    <property type="project" value="UniProtKB"/>
</dbReference>
<dbReference type="GO" id="GO:0007409">
    <property type="term" value="P:axonogenesis"/>
    <property type="evidence" value="ECO:0007669"/>
    <property type="project" value="Ensembl"/>
</dbReference>
<dbReference type="GO" id="GO:0050908">
    <property type="term" value="P:detection of light stimulus involved in visual perception"/>
    <property type="evidence" value="ECO:0007669"/>
    <property type="project" value="Ensembl"/>
</dbReference>
<dbReference type="GO" id="GO:0008340">
    <property type="term" value="P:determination of adult lifespan"/>
    <property type="evidence" value="ECO:0007669"/>
    <property type="project" value="Ensembl"/>
</dbReference>
<dbReference type="GO" id="GO:0042755">
    <property type="term" value="P:eating behavior"/>
    <property type="evidence" value="ECO:0007669"/>
    <property type="project" value="Ensembl"/>
</dbReference>
<dbReference type="GO" id="GO:0042472">
    <property type="term" value="P:inner ear morphogenesis"/>
    <property type="evidence" value="ECO:0007669"/>
    <property type="project" value="Ensembl"/>
</dbReference>
<dbReference type="GO" id="GO:0003011">
    <property type="term" value="P:involuntary skeletal muscle contraction"/>
    <property type="evidence" value="ECO:0007669"/>
    <property type="project" value="Ensembl"/>
</dbReference>
<dbReference type="GO" id="GO:0008285">
    <property type="term" value="P:negative regulation of cell population proliferation"/>
    <property type="evidence" value="ECO:0000304"/>
    <property type="project" value="ProtInc"/>
</dbReference>
<dbReference type="GO" id="GO:0060052">
    <property type="term" value="P:neurofilament cytoskeleton organization"/>
    <property type="evidence" value="ECO:0007669"/>
    <property type="project" value="Ensembl"/>
</dbReference>
<dbReference type="GO" id="GO:0050884">
    <property type="term" value="P:neuromuscular process controlling posture"/>
    <property type="evidence" value="ECO:0007669"/>
    <property type="project" value="Ensembl"/>
</dbReference>
<dbReference type="GO" id="GO:0048666">
    <property type="term" value="P:neuron development"/>
    <property type="evidence" value="ECO:0000318"/>
    <property type="project" value="GO_Central"/>
</dbReference>
<dbReference type="GO" id="GO:0045332">
    <property type="term" value="P:phospholipid translocation"/>
    <property type="evidence" value="ECO:0000318"/>
    <property type="project" value="GO_Central"/>
</dbReference>
<dbReference type="GO" id="GO:0040018">
    <property type="term" value="P:positive regulation of multicellular organism growth"/>
    <property type="evidence" value="ECO:0007669"/>
    <property type="project" value="Ensembl"/>
</dbReference>
<dbReference type="GO" id="GO:0010976">
    <property type="term" value="P:positive regulation of neuron projection development"/>
    <property type="evidence" value="ECO:0007669"/>
    <property type="project" value="Ensembl"/>
</dbReference>
<dbReference type="GO" id="GO:0061092">
    <property type="term" value="P:positive regulation of phospholipid translocation"/>
    <property type="evidence" value="ECO:0007669"/>
    <property type="project" value="Ensembl"/>
</dbReference>
<dbReference type="GO" id="GO:0010996">
    <property type="term" value="P:response to auditory stimulus"/>
    <property type="evidence" value="ECO:0007669"/>
    <property type="project" value="Ensembl"/>
</dbReference>
<dbReference type="GO" id="GO:0010842">
    <property type="term" value="P:retina layer formation"/>
    <property type="evidence" value="ECO:0007669"/>
    <property type="project" value="Ensembl"/>
</dbReference>
<dbReference type="GO" id="GO:0043588">
    <property type="term" value="P:skin development"/>
    <property type="evidence" value="ECO:0007669"/>
    <property type="project" value="Ensembl"/>
</dbReference>
<dbReference type="CDD" id="cd02073">
    <property type="entry name" value="P-type_ATPase_APLT_Dnf-like"/>
    <property type="match status" value="1"/>
</dbReference>
<dbReference type="FunFam" id="2.70.150.10:FF:000021">
    <property type="entry name" value="Phospholipid-transporting ATPase"/>
    <property type="match status" value="1"/>
</dbReference>
<dbReference type="FunFam" id="3.40.1110.10:FF:000010">
    <property type="entry name" value="Phospholipid-transporting ATPase"/>
    <property type="match status" value="1"/>
</dbReference>
<dbReference type="FunFam" id="3.40.50.1000:FF:000010">
    <property type="entry name" value="Phospholipid-transporting ATPase"/>
    <property type="match status" value="1"/>
</dbReference>
<dbReference type="Gene3D" id="3.40.1110.10">
    <property type="entry name" value="Calcium-transporting ATPase, cytoplasmic domain N"/>
    <property type="match status" value="1"/>
</dbReference>
<dbReference type="Gene3D" id="2.70.150.10">
    <property type="entry name" value="Calcium-transporting ATPase, cytoplasmic transduction domain A"/>
    <property type="match status" value="1"/>
</dbReference>
<dbReference type="Gene3D" id="3.40.50.1000">
    <property type="entry name" value="HAD superfamily/HAD-like"/>
    <property type="match status" value="1"/>
</dbReference>
<dbReference type="InterPro" id="IPR023299">
    <property type="entry name" value="ATPase_P-typ_cyto_dom_N"/>
</dbReference>
<dbReference type="InterPro" id="IPR018303">
    <property type="entry name" value="ATPase_P-typ_P_site"/>
</dbReference>
<dbReference type="InterPro" id="IPR023298">
    <property type="entry name" value="ATPase_P-typ_TM_dom_sf"/>
</dbReference>
<dbReference type="InterPro" id="IPR008250">
    <property type="entry name" value="ATPase_P-typ_transduc_dom_A_sf"/>
</dbReference>
<dbReference type="InterPro" id="IPR036412">
    <property type="entry name" value="HAD-like_sf"/>
</dbReference>
<dbReference type="InterPro" id="IPR023214">
    <property type="entry name" value="HAD_sf"/>
</dbReference>
<dbReference type="InterPro" id="IPR006539">
    <property type="entry name" value="P-type_ATPase_IV"/>
</dbReference>
<dbReference type="InterPro" id="IPR032631">
    <property type="entry name" value="P-type_ATPase_N"/>
</dbReference>
<dbReference type="InterPro" id="IPR001757">
    <property type="entry name" value="P_typ_ATPase"/>
</dbReference>
<dbReference type="InterPro" id="IPR032630">
    <property type="entry name" value="P_typ_ATPase_c"/>
</dbReference>
<dbReference type="InterPro" id="IPR044492">
    <property type="entry name" value="P_typ_ATPase_HD_dom"/>
</dbReference>
<dbReference type="NCBIfam" id="TIGR01652">
    <property type="entry name" value="ATPase-Plipid"/>
    <property type="match status" value="1"/>
</dbReference>
<dbReference type="NCBIfam" id="TIGR01494">
    <property type="entry name" value="ATPase_P-type"/>
    <property type="match status" value="2"/>
</dbReference>
<dbReference type="PANTHER" id="PTHR24092:SF98">
    <property type="entry name" value="PHOSPHOLIPID-TRANSPORTING ATPASE IB"/>
    <property type="match status" value="1"/>
</dbReference>
<dbReference type="PANTHER" id="PTHR24092">
    <property type="entry name" value="PROBABLE PHOSPHOLIPID-TRANSPORTING ATPASE"/>
    <property type="match status" value="1"/>
</dbReference>
<dbReference type="Pfam" id="PF13246">
    <property type="entry name" value="Cation_ATPase"/>
    <property type="match status" value="1"/>
</dbReference>
<dbReference type="Pfam" id="PF00122">
    <property type="entry name" value="E1-E2_ATPase"/>
    <property type="match status" value="1"/>
</dbReference>
<dbReference type="Pfam" id="PF16212">
    <property type="entry name" value="PhoLip_ATPase_C"/>
    <property type="match status" value="1"/>
</dbReference>
<dbReference type="Pfam" id="PF16209">
    <property type="entry name" value="PhoLip_ATPase_N"/>
    <property type="match status" value="1"/>
</dbReference>
<dbReference type="PRINTS" id="PR00119">
    <property type="entry name" value="CATATPASE"/>
</dbReference>
<dbReference type="SFLD" id="SFLDG00002">
    <property type="entry name" value="C1.7:_P-type_atpase_like"/>
    <property type="match status" value="1"/>
</dbReference>
<dbReference type="SFLD" id="SFLDF00027">
    <property type="entry name" value="p-type_atpase"/>
    <property type="match status" value="1"/>
</dbReference>
<dbReference type="SUPFAM" id="SSF81653">
    <property type="entry name" value="Calcium ATPase, transduction domain A"/>
    <property type="match status" value="1"/>
</dbReference>
<dbReference type="SUPFAM" id="SSF81665">
    <property type="entry name" value="Calcium ATPase, transmembrane domain M"/>
    <property type="match status" value="1"/>
</dbReference>
<dbReference type="SUPFAM" id="SSF56784">
    <property type="entry name" value="HAD-like"/>
    <property type="match status" value="1"/>
</dbReference>
<dbReference type="SUPFAM" id="SSF81660">
    <property type="entry name" value="Metal cation-transporting ATPase, ATP-binding domain N"/>
    <property type="match status" value="1"/>
</dbReference>
<dbReference type="PROSITE" id="PS00154">
    <property type="entry name" value="ATPASE_E1_E2"/>
    <property type="match status" value="1"/>
</dbReference>
<accession>Q9NTI2</accession>
<accession>Q6ZSP3</accession>
<accession>Q9H527</accession>
<accession>Q9NPU6</accession>
<accession>Q9NTL2</accession>
<accession>Q9NYM3</accession>
<name>AT8A2_HUMAN</name>
<keyword id="KW-0025">Alternative splicing</keyword>
<keyword id="KW-0067">ATP-binding</keyword>
<keyword id="KW-1003">Cell membrane</keyword>
<keyword id="KW-0966">Cell projection</keyword>
<keyword id="KW-0160">Chromosomal rearrangement</keyword>
<keyword id="KW-0225">Disease variant</keyword>
<keyword id="KW-0967">Endosome</keyword>
<keyword id="KW-0333">Golgi apparatus</keyword>
<keyword id="KW-0991">Intellectual disability</keyword>
<keyword id="KW-0445">Lipid transport</keyword>
<keyword id="KW-0460">Magnesium</keyword>
<keyword id="KW-0472">Membrane</keyword>
<keyword id="KW-0479">Metal-binding</keyword>
<keyword id="KW-0547">Nucleotide-binding</keyword>
<keyword id="KW-0597">Phosphoprotein</keyword>
<keyword id="KW-1267">Proteomics identification</keyword>
<keyword id="KW-1185">Reference proteome</keyword>
<keyword id="KW-1278">Translocase</keyword>
<keyword id="KW-0812">Transmembrane</keyword>
<keyword id="KW-1133">Transmembrane helix</keyword>
<keyword id="KW-0813">Transport</keyword>
<comment type="function">
    <text evidence="1 16 19">Catalytic component of a P4-ATPase flippase complex which catalyzes the hydrolysis of ATP coupled to the transport of aminophospholipids from the outer to the inner leaflet of various membranes and ensures the maintenance of asymmetric distribution of phospholipids (By similarity). Able to translocate phosphatidylserine, but not phosphatidylcholine (PubMed:34403372). Phospholipid translocation also seems to be implicated in vesicle formation and in uptake of lipid signaling molecules (By similarity). Reconstituted to liposomes, the ATP8A2:TMEM30A flippase complex predominantly transports phosphatidylserine (PS) and to a lesser extent phosphatidylethanolamine (PE) (By similarity). Phospholipid translocation is not associated with a countertransport of an inorganic ion or other charged substrate from the cytoplasmic side toward the exoplasm in connection with the phosphorylation from ATP (By similarity). ATP8A2:TMEM30A may be involved in regulation of neurite outgrowth (By similarity). Proposed to function in the generation and maintenance of phospholipid asymmetry in photoreceptor disk membranes and neuronal axon membranes (By similarity). May be involved in vesicle trafficking in neuronal cells (By similarity). Required for normal visual and auditory function; involved in photoreceptor and inner ear spiral ganglion cell survival (By similarity).</text>
</comment>
<comment type="catalytic activity">
    <reaction evidence="19">
        <text>ATP + H2O + phospholipidSide 1 = ADP + phosphate + phospholipidSide 2.</text>
        <dbReference type="EC" id="7.6.2.1"/>
    </reaction>
</comment>
<comment type="catalytic activity">
    <reaction evidence="19">
        <text>a 1,2-diacyl-sn-glycero-3-phospho-L-serine(out) + ATP + H2O = a 1,2-diacyl-sn-glycero-3-phospho-L-serine(in) + ADP + phosphate + H(+)</text>
        <dbReference type="Rhea" id="RHEA:38567"/>
        <dbReference type="ChEBI" id="CHEBI:15377"/>
        <dbReference type="ChEBI" id="CHEBI:15378"/>
        <dbReference type="ChEBI" id="CHEBI:30616"/>
        <dbReference type="ChEBI" id="CHEBI:43474"/>
        <dbReference type="ChEBI" id="CHEBI:57262"/>
        <dbReference type="ChEBI" id="CHEBI:456216"/>
    </reaction>
    <physiologicalReaction direction="left-to-right" evidence="19">
        <dbReference type="Rhea" id="RHEA:38568"/>
    </physiologicalReaction>
</comment>
<comment type="catalytic activity">
    <reaction evidence="19">
        <text>a 1,2-diacyl-sn-glycero-3-phosphoethanolamine(in) + ATP + H2O = a 1,2-diacyl-sn-glycero-3-phosphoethanolamine(out) + ADP + phosphate + H(+)</text>
        <dbReference type="Rhea" id="RHEA:36439"/>
        <dbReference type="ChEBI" id="CHEBI:15377"/>
        <dbReference type="ChEBI" id="CHEBI:15378"/>
        <dbReference type="ChEBI" id="CHEBI:30616"/>
        <dbReference type="ChEBI" id="CHEBI:43474"/>
        <dbReference type="ChEBI" id="CHEBI:64612"/>
        <dbReference type="ChEBI" id="CHEBI:456216"/>
    </reaction>
    <physiologicalReaction direction="left-to-right" evidence="19">
        <dbReference type="Rhea" id="RHEA:36440"/>
    </physiologicalReaction>
</comment>
<comment type="cofactor">
    <cofactor evidence="5">
        <name>Mg(2+)</name>
        <dbReference type="ChEBI" id="CHEBI:18420"/>
    </cofactor>
</comment>
<comment type="subunit">
    <text evidence="9 10 15">Component of a P4-ATPase flippase complex which consists of a catalytic alpha subunit and an accessory beta subunit. Interacts with TMEM30A to form a flippase complex.</text>
</comment>
<comment type="subcellular location">
    <subcellularLocation>
        <location evidence="18">Membrane</location>
        <topology evidence="6">Multi-pass membrane protein</topology>
    </subcellularLocation>
    <subcellularLocation>
        <location evidence="9">Golgi apparatus membrane</location>
    </subcellularLocation>
    <subcellularLocation>
        <location evidence="3">Endosome membrane</location>
    </subcellularLocation>
    <subcellularLocation>
        <location evidence="9">Cell membrane</location>
    </subcellularLocation>
    <subcellularLocation>
        <location evidence="3">Photoreceptor outer segment membrane</location>
    </subcellularLocation>
    <subcellularLocation>
        <location evidence="1">Photoreceptor inner segment membrane</location>
    </subcellularLocation>
    <text evidence="1 3">Localizes to the Golgi and endosomes in photoreceptor cells (By similarity). Localizes to disk membranes of rod photoreceptor outer segments (ROS) (By similarity).</text>
</comment>
<comment type="alternative products">
    <event type="alternative splicing"/>
    <isoform>
        <id>Q9NTI2-4</id>
        <name>3</name>
        <sequence type="displayed"/>
    </isoform>
    <isoform>
        <id>Q9NTI2-1</id>
        <name>1</name>
        <sequence type="described" ref="VSP_059718"/>
    </isoform>
    <isoform>
        <id>Q9NTI2-3</id>
        <name>2</name>
        <sequence type="described" ref="VSP_059718 VSP_059719 VSP_059720"/>
    </isoform>
</comment>
<comment type="tissue specificity">
    <text evidence="8 11">Strongly expressed in the brain, cerebellum, retina and testis.</text>
</comment>
<comment type="disease" evidence="11 12 13 14 15">
    <disease id="DI-03773">
        <name>Cerebellar ataxia, impaired intellectual development, and dysequilibrium syndrome 4</name>
        <acronym>CAMRQ4</acronym>
        <description>An autosomal recessive, congenital cerebellar ataxia associated with dysarthia, quadrupedal gait and intellectual disability.</description>
        <dbReference type="MIM" id="615268"/>
    </disease>
    <text>The disease is caused by variants affecting the gene represented in this entry.</text>
</comment>
<comment type="disease">
    <text evidence="8">A chromosomal aberration disrupting ATP8A2 has been found in a patient with severe intellectual disability and major hypotonia. Translocation t(10;13)(p12.1;q12.13) (PubMed:20683487).</text>
</comment>
<comment type="similarity">
    <text evidence="17">Belongs to the cation transport ATPase (P-type) (TC 3.A.3) family. Type IV subfamily.</text>
</comment>
<comment type="sequence caution" evidence="17">
    <conflict type="erroneous initiation">
        <sequence resource="EMBL-CDS" id="BAC04396"/>
    </conflict>
</comment>
<comment type="sequence caution" evidence="17">
    <molecule>Isoform 2</molecule>
    <conflict type="frameshift">
        <sequence resource="EMBL-CDS" id="AAF40215"/>
    </conflict>
</comment>
<feature type="chain" id="PRO_0000046362" description="Phospholipid-transporting ATPase IB">
    <location>
        <begin position="1"/>
        <end position="1188"/>
    </location>
</feature>
<feature type="topological domain" description="Cytoplasmic" evidence="17">
    <location>
        <begin position="1"/>
        <end position="94"/>
    </location>
</feature>
<feature type="transmembrane region" description="Helical" evidence="6">
    <location>
        <begin position="95"/>
        <end position="115"/>
    </location>
</feature>
<feature type="topological domain" description="Extracellular" evidence="17">
    <location>
        <begin position="116"/>
        <end position="119"/>
    </location>
</feature>
<feature type="transmembrane region" description="Helical" evidence="6">
    <location>
        <begin position="120"/>
        <end position="140"/>
    </location>
</feature>
<feature type="topological domain" description="Cytoplasmic" evidence="17">
    <location>
        <begin position="141"/>
        <end position="316"/>
    </location>
</feature>
<feature type="transmembrane region" description="Helical" evidence="6">
    <location>
        <begin position="317"/>
        <end position="337"/>
    </location>
</feature>
<feature type="topological domain" description="Extracellular" evidence="17">
    <location>
        <begin position="338"/>
        <end position="364"/>
    </location>
</feature>
<feature type="transmembrane region" description="Helical" evidence="6">
    <location>
        <begin position="365"/>
        <end position="385"/>
    </location>
</feature>
<feature type="topological domain" description="Cytoplasmic" evidence="17">
    <location>
        <begin position="386"/>
        <end position="887"/>
    </location>
</feature>
<feature type="transmembrane region" description="Helical" evidence="6">
    <location>
        <begin position="888"/>
        <end position="908"/>
    </location>
</feature>
<feature type="topological domain" description="Extracellular" evidence="17">
    <location>
        <begin position="909"/>
        <end position="910"/>
    </location>
</feature>
<feature type="transmembrane region" description="Helical" evidence="6">
    <location>
        <begin position="911"/>
        <end position="931"/>
    </location>
</feature>
<feature type="topological domain" description="Cytoplasmic" evidence="17">
    <location>
        <begin position="932"/>
        <end position="959"/>
    </location>
</feature>
<feature type="transmembrane region" description="Helical" evidence="6">
    <location>
        <begin position="960"/>
        <end position="980"/>
    </location>
</feature>
<feature type="topological domain" description="Extracellular" evidence="17">
    <location>
        <begin position="981"/>
        <end position="997"/>
    </location>
</feature>
<feature type="transmembrane region" description="Helical" evidence="6">
    <location>
        <begin position="998"/>
        <end position="1018"/>
    </location>
</feature>
<feature type="topological domain" description="Cytoplasmic" evidence="17">
    <location>
        <begin position="1019"/>
        <end position="1028"/>
    </location>
</feature>
<feature type="transmembrane region" description="Helical" evidence="6">
    <location>
        <begin position="1029"/>
        <end position="1049"/>
    </location>
</feature>
<feature type="topological domain" description="Extracellular" evidence="17">
    <location>
        <begin position="1050"/>
        <end position="1063"/>
    </location>
</feature>
<feature type="transmembrane region" description="Helical" evidence="6">
    <location>
        <begin position="1064"/>
        <end position="1084"/>
    </location>
</feature>
<feature type="topological domain" description="Cytoplasmic" evidence="17">
    <location>
        <begin position="1085"/>
        <end position="1188"/>
    </location>
</feature>
<feature type="region of interest" description="Disordered" evidence="7">
    <location>
        <begin position="1162"/>
        <end position="1188"/>
    </location>
</feature>
<feature type="compositionally biased region" description="Basic and acidic residues" evidence="7">
    <location>
        <begin position="1163"/>
        <end position="1182"/>
    </location>
</feature>
<feature type="active site" description="4-aspartylphosphate intermediate" evidence="5">
    <location>
        <position position="428"/>
    </location>
</feature>
<feature type="binding site" evidence="5">
    <location>
        <position position="428"/>
    </location>
    <ligand>
        <name>ATP</name>
        <dbReference type="ChEBI" id="CHEBI:30616"/>
    </ligand>
</feature>
<feature type="binding site" evidence="5">
    <location>
        <position position="428"/>
    </location>
    <ligand>
        <name>Mg(2+)</name>
        <dbReference type="ChEBI" id="CHEBI:18420"/>
    </ligand>
</feature>
<feature type="binding site" evidence="5">
    <location>
        <position position="429"/>
    </location>
    <ligand>
        <name>ATP</name>
        <dbReference type="ChEBI" id="CHEBI:30616"/>
    </ligand>
</feature>
<feature type="binding site" evidence="2">
    <location>
        <position position="430"/>
    </location>
    <ligand>
        <name>ATP</name>
        <dbReference type="ChEBI" id="CHEBI:30616"/>
    </ligand>
</feature>
<feature type="binding site" evidence="5">
    <location>
        <position position="430"/>
    </location>
    <ligand>
        <name>Mg(2+)</name>
        <dbReference type="ChEBI" id="CHEBI:18420"/>
    </ligand>
</feature>
<feature type="binding site" evidence="2">
    <location>
        <position position="528"/>
    </location>
    <ligand>
        <name>ATP</name>
        <dbReference type="ChEBI" id="CHEBI:30616"/>
    </ligand>
</feature>
<feature type="binding site" evidence="5">
    <location>
        <position position="569"/>
    </location>
    <ligand>
        <name>ATP</name>
        <dbReference type="ChEBI" id="CHEBI:30616"/>
    </ligand>
</feature>
<feature type="binding site" evidence="2">
    <location>
        <position position="592"/>
    </location>
    <ligand>
        <name>ATP</name>
        <dbReference type="ChEBI" id="CHEBI:30616"/>
    </ligand>
</feature>
<feature type="binding site" evidence="2">
    <location>
        <position position="625"/>
    </location>
    <ligand>
        <name>ATP</name>
        <dbReference type="ChEBI" id="CHEBI:30616"/>
    </ligand>
</feature>
<feature type="binding site" evidence="2">
    <location>
        <position position="705"/>
    </location>
    <ligand>
        <name>ATP</name>
        <dbReference type="ChEBI" id="CHEBI:30616"/>
    </ligand>
</feature>
<feature type="binding site" evidence="2">
    <location>
        <position position="706"/>
    </location>
    <ligand>
        <name>ATP</name>
        <dbReference type="ChEBI" id="CHEBI:30616"/>
    </ligand>
</feature>
<feature type="binding site" evidence="2">
    <location>
        <position position="707"/>
    </location>
    <ligand>
        <name>ATP</name>
        <dbReference type="ChEBI" id="CHEBI:30616"/>
    </ligand>
</feature>
<feature type="binding site" evidence="2">
    <location>
        <position position="795"/>
    </location>
    <ligand>
        <name>ATP</name>
        <dbReference type="ChEBI" id="CHEBI:30616"/>
    </ligand>
</feature>
<feature type="binding site" evidence="2">
    <location>
        <position position="801"/>
    </location>
    <ligand>
        <name>ATP</name>
        <dbReference type="ChEBI" id="CHEBI:30616"/>
    </ligand>
</feature>
<feature type="binding site" evidence="5">
    <location>
        <position position="821"/>
    </location>
    <ligand>
        <name>Mg(2+)</name>
        <dbReference type="ChEBI" id="CHEBI:18420"/>
    </ligand>
</feature>
<feature type="binding site" evidence="5">
    <location>
        <position position="824"/>
    </location>
    <ligand>
        <name>ATP</name>
        <dbReference type="ChEBI" id="CHEBI:30616"/>
    </ligand>
</feature>
<feature type="binding site" evidence="5">
    <location>
        <position position="825"/>
    </location>
    <ligand>
        <name>ATP</name>
        <dbReference type="ChEBI" id="CHEBI:30616"/>
    </ligand>
</feature>
<feature type="binding site" evidence="4">
    <location>
        <position position="825"/>
    </location>
    <ligand>
        <name>Mg(2+)</name>
        <dbReference type="ChEBI" id="CHEBI:18420"/>
    </ligand>
</feature>
<feature type="site" description="Involved in the recognition of the lipid substrate on the exoplasmic side" evidence="1">
    <location>
        <position position="371"/>
    </location>
</feature>
<feature type="site" description="Involved in the release of the transported lipid into the cytosolic leaflet" evidence="1">
    <location>
        <position position="376"/>
    </location>
</feature>
<feature type="modified residue" description="Phosphothreonine" evidence="3">
    <location>
        <position position="45"/>
    </location>
</feature>
<feature type="splice variant" id="VSP_059718" description="In isoform 1 and isoform 2.">
    <location>
        <begin position="1"/>
        <end position="40"/>
    </location>
</feature>
<feature type="splice variant" id="VSP_059719" description="In isoform 2.">
    <original>MGQEQTFGILNVLE</original>
    <variation>VSNMRVHISDHLLL</variation>
    <location>
        <begin position="555"/>
        <end position="568"/>
    </location>
</feature>
<feature type="splice variant" id="VSP_059720" description="In isoform 2.">
    <location>
        <begin position="569"/>
        <end position="1188"/>
    </location>
</feature>
<feature type="sequence variant" id="VAR_069928" description="In CAMRQ4; abolishes ATPase activity. No effect on interaction with TMEM30A; dbSNP:rs546968533." evidence="11 15">
    <original>I</original>
    <variation>M</variation>
    <location>
        <position position="376"/>
    </location>
</feature>
<feature type="sequence variant" id="VAR_084371" description="In CAMRQ4; uncertain significance; abolishes ATPase activity. No effect on interaction with TMEM30A; dbSNP:rs1057522489." evidence="14 15">
    <original>K</original>
    <variation>M</variation>
    <location>
        <position position="429"/>
    </location>
</feature>
<feature type="sequence variant" id="VAR_084370" description="In CAMRQ4; uncertain significance; abolishes ATPase activity and results in protein misfolding and proteasomal degradation. No effect on interaction with TMEM30A." evidence="12 15">
    <original>K</original>
    <variation>N</variation>
    <location>
        <position position="429"/>
    </location>
</feature>
<feature type="sequence variant" id="VAR_084372" description="In CAMRQ4; uncertain significance; results in protein misfolding and proteasomal degradation." evidence="12 15">
    <original>A</original>
    <variation>P</variation>
    <location>
        <position position="544"/>
    </location>
</feature>
<feature type="sequence variant" id="VAR_084373" description="In CAMRQ4; uncertain significance; dbSNP:rs755133567." evidence="13">
    <location>
        <begin position="581"/>
        <end position="1188"/>
    </location>
</feature>
<feature type="sequence variant" id="VAR_084374" description="In CAMRQ4; uncertain significance." evidence="14">
    <location>
        <begin position="586"/>
        <end position="1188"/>
    </location>
</feature>
<feature type="sequence variant" id="VAR_084375" description="In CAMRQ4; uncertain significance; results in protein misfolding and proteasomal degradation; dbSNP:rs764911379." evidence="12 15">
    <original>R</original>
    <variation>W</variation>
    <location>
        <position position="625"/>
    </location>
</feature>
<feature type="sequence variant" id="VAR_084376" description="In CAMRQ4; uncertain significance; results in protein misfolding and proteasomal degradation." evidence="14 15">
    <original>W</original>
    <variation>R</variation>
    <location>
        <position position="702"/>
    </location>
</feature>
<feature type="sequence variant" id="VAR_084377" description="In CAMRQ4; uncertain significance; dbSNP:rs1593410369." evidence="13">
    <original>N</original>
    <variation>D</variation>
    <location>
        <position position="917"/>
    </location>
</feature>
<feature type="sequence variant" id="VAR_055543" description="In dbSNP:rs2296242.">
    <original>A</original>
    <variation>T</variation>
    <location>
        <position position="1069"/>
    </location>
</feature>
<feature type="mutagenesis site" description="No effect on flippase activity toward phosphatidylserine. Like the wild type, it is unable to translocate phosphatidylcholine." evidence="16">
    <original>Q</original>
    <variation>A</variation>
    <location>
        <position position="107"/>
    </location>
</feature>
<feature type="mutagenesis site" description="Reduced flippase activity toward phosphatidylserine. Like the wild type, it is unable to translocate phosphatidylcholine." evidence="16">
    <original>Q</original>
    <variation>E</variation>
    <location>
        <position position="107"/>
    </location>
</feature>
<feature type="mutagenesis site" description="Abolishes ATPase activity." evidence="15">
    <original>K</original>
    <variation>A</variation>
    <location>
        <position position="429"/>
    </location>
</feature>
<feature type="mutagenesis site" description="Abolishes ATPase activity." evidence="15">
    <original>K</original>
    <variation>L</variation>
    <location>
        <position position="429"/>
    </location>
</feature>
<feature type="mutagenesis site" description="Abolishes ATPase activity." evidence="15">
    <original>K</original>
    <variation>R</variation>
    <location>
        <position position="429"/>
    </location>
</feature>
<feature type="sequence conflict" description="In Ref. 2; BAC86905." evidence="17" ref="2">
    <original>R</original>
    <variation>K</variation>
    <location>
        <position position="573"/>
    </location>
</feature>
<sequence length="1188" mass="133599">MLNGAGLDKALKMSLPRRSRIRSSVGPVRSSLGYKKAEDEMSRATSVGDQLEAPARTIYLNQPHLNKFRDNQISTAKYSVLTFLPRFLYEQIRRAANAFFLFIALLQQIPDVSPTGRYTTLVPLIIILTIAGIKEIVEDFKRHKADNAVNKKKTIVLRNGMWHTIMWKEVAVGDIVKVVNGQYLPADVVLLSSSEPQAMCYVETANLDGETNLKIRQGLSHTADMQTREVLMKLSGTIECEGPNRHLYDFTGNLNLDGKSLVALGPDQILLRGTQLRNTQWVFGIVVYTGHDTKLMQNSTKAPLKRSNVEKVTNVQILVLFGILLVMALVSSAGALYWNRSHGEKNWYIKKMDTTSDNFGYNLLTFIILYNNLIPISLLVTLEVVKYTQALFINWDTDMYYIGNDTPAMARTSNLNEELGQVKYLFSDKTGTLTCNIMNFKKCSIAGVTYGHFPELAREPSSDDFCRMPPPCSDSCDFDDPRLLKNIEDRHPTAPCIQEFLTLLAVCHTVVPEKDGDNIIYQASSPDEAALVKGAKKLGFVFTARTPFSVIIEAMGQEQTFGILNVLEFSSDRKRMSVIVRTPSGRLRLYCKGADNVIFERLSKDSKYMEETLCHLEYFATEGLRTLCVAYADLSENEYEEWLKVYQEASTILKDRAQRLEECYEIIEKNLLLLGATAIEDRLQAGVPETIATLLKAEIKIWVLTGDKQETAINIGYSCRLVSQNMALILLKEDSLDATRAAITQHCTDLGNLLGKENDVALIIDGHTLKYALSFEVRRSFLDLALSCKAVICCRVSPLQKSEIVDVVKKRVKAITLAIGDGANDVGMIQTAHVGVGISGNEGMQATNNSDYAIAQFSYLEKLLLVHGAWSYNRVTKCILYCFYKNVVLYIIELWFAFVNGFSGQILFERWCIGLYNVIFTALPPFTLGIFERSCTQESMLRFPQLYKITQNGEGFNTKVFWGHCINALVHSLILFWFPMKALEHDTVLTSGHATDYLFVGNIVYTYVVVTVCLKAGLETTAWTKFSHLAVWGSMLTWLVFFGIYSTIWPTIPIAPDMRGQATMVLSSAHFWLGLFLVPTACLIEDVAWRAAKHTCKKTLLEEVQELETKSRVLGKAVLRDSNGKRLNERDRLIKRLGRKTPPTLFRGSSLQQGVPHGYAFSQEEHGAVSQEEVIRAYDTTKKKSRKK</sequence>
<protein>
    <recommendedName>
        <fullName evidence="19">Phospholipid-transporting ATPase IB</fullName>
        <ecNumber evidence="19">7.6.2.1</ecNumber>
    </recommendedName>
    <alternativeName>
        <fullName>ATPase class I type 8A member 2</fullName>
    </alternativeName>
    <alternativeName>
        <fullName>ML-1</fullName>
    </alternativeName>
    <alternativeName>
        <fullName>P4-ATPase flippase complex alpha subunit ATP8A2</fullName>
    </alternativeName>
</protein>
<proteinExistence type="evidence at protein level"/>
<organism>
    <name type="scientific">Homo sapiens</name>
    <name type="common">Human</name>
    <dbReference type="NCBI Taxonomy" id="9606"/>
    <lineage>
        <taxon>Eukaryota</taxon>
        <taxon>Metazoa</taxon>
        <taxon>Chordata</taxon>
        <taxon>Craniata</taxon>
        <taxon>Vertebrata</taxon>
        <taxon>Euteleostomi</taxon>
        <taxon>Mammalia</taxon>
        <taxon>Eutheria</taxon>
        <taxon>Euarchontoglires</taxon>
        <taxon>Primates</taxon>
        <taxon>Haplorrhini</taxon>
        <taxon>Catarrhini</taxon>
        <taxon>Hominidae</taxon>
        <taxon>Homo</taxon>
    </lineage>
</organism>